<feature type="chain" id="PRO_0000173749" description="Formimidoylglutamase">
    <location>
        <begin position="1"/>
        <end position="319"/>
    </location>
</feature>
<feature type="binding site" evidence="1 5">
    <location>
        <position position="127"/>
    </location>
    <ligand>
        <name>Mn(2+)</name>
        <dbReference type="ChEBI" id="CHEBI:29035"/>
        <label>1</label>
    </ligand>
</feature>
<feature type="binding site" evidence="1 5">
    <location>
        <position position="150"/>
    </location>
    <ligand>
        <name>Mn(2+)</name>
        <dbReference type="ChEBI" id="CHEBI:29035"/>
        <label>1</label>
    </ligand>
</feature>
<feature type="binding site" evidence="1 5">
    <location>
        <position position="150"/>
    </location>
    <ligand>
        <name>Mn(2+)</name>
        <dbReference type="ChEBI" id="CHEBI:29035"/>
        <label>2</label>
    </ligand>
</feature>
<feature type="binding site" evidence="1 5">
    <location>
        <position position="152"/>
    </location>
    <ligand>
        <name>Mn(2+)</name>
        <dbReference type="ChEBI" id="CHEBI:29035"/>
        <label>2</label>
    </ligand>
</feature>
<feature type="binding site" evidence="1 5">
    <location>
        <position position="154"/>
    </location>
    <ligand>
        <name>Mn(2+)</name>
        <dbReference type="ChEBI" id="CHEBI:29035"/>
        <label>1</label>
    </ligand>
</feature>
<feature type="binding site" evidence="1 5">
    <location>
        <position position="242"/>
    </location>
    <ligand>
        <name>Mn(2+)</name>
        <dbReference type="ChEBI" id="CHEBI:29035"/>
        <label>1</label>
    </ligand>
</feature>
<feature type="binding site" evidence="1 5">
    <location>
        <position position="242"/>
    </location>
    <ligand>
        <name>Mn(2+)</name>
        <dbReference type="ChEBI" id="CHEBI:29035"/>
        <label>2</label>
    </ligand>
</feature>
<feature type="binding site" evidence="1 5">
    <location>
        <position position="244"/>
    </location>
    <ligand>
        <name>Mn(2+)</name>
        <dbReference type="ChEBI" id="CHEBI:29035"/>
        <label>2</label>
    </ligand>
</feature>
<feature type="helix" evidence="7">
    <location>
        <begin position="22"/>
        <end position="24"/>
    </location>
</feature>
<feature type="strand" evidence="7">
    <location>
        <begin position="26"/>
        <end position="28"/>
    </location>
</feature>
<feature type="strand" evidence="7">
    <location>
        <begin position="36"/>
        <end position="42"/>
    </location>
</feature>
<feature type="helix" evidence="7">
    <location>
        <begin position="54"/>
        <end position="56"/>
    </location>
</feature>
<feature type="helix" evidence="7">
    <location>
        <begin position="57"/>
        <end position="67"/>
    </location>
</feature>
<feature type="turn" evidence="7">
    <location>
        <begin position="73"/>
        <end position="76"/>
    </location>
</feature>
<feature type="strand" evidence="7">
    <location>
        <begin position="77"/>
        <end position="82"/>
    </location>
</feature>
<feature type="strand" evidence="7">
    <location>
        <begin position="84"/>
        <end position="90"/>
    </location>
</feature>
<feature type="helix" evidence="7">
    <location>
        <begin position="97"/>
        <end position="114"/>
    </location>
</feature>
<feature type="strand" evidence="7">
    <location>
        <begin position="118"/>
        <end position="125"/>
    </location>
</feature>
<feature type="helix" evidence="7">
    <location>
        <begin position="129"/>
        <end position="141"/>
    </location>
</feature>
<feature type="strand" evidence="7">
    <location>
        <begin position="143"/>
        <end position="149"/>
    </location>
</feature>
<feature type="helix" evidence="7">
    <location>
        <begin position="168"/>
        <end position="174"/>
    </location>
</feature>
<feature type="helix" evidence="7">
    <location>
        <begin position="180"/>
        <end position="182"/>
    </location>
</feature>
<feature type="strand" evidence="7">
    <location>
        <begin position="183"/>
        <end position="188"/>
    </location>
</feature>
<feature type="helix" evidence="7">
    <location>
        <begin position="195"/>
        <end position="203"/>
    </location>
</feature>
<feature type="strand" evidence="7">
    <location>
        <begin position="207"/>
        <end position="210"/>
    </location>
</feature>
<feature type="helix" evidence="7">
    <location>
        <begin position="211"/>
        <end position="217"/>
    </location>
</feature>
<feature type="helix" evidence="7">
    <location>
        <begin position="219"/>
        <end position="231"/>
    </location>
</feature>
<feature type="strand" evidence="7">
    <location>
        <begin position="235"/>
        <end position="242"/>
    </location>
</feature>
<feature type="helix" evidence="7">
    <location>
        <begin position="243"/>
        <end position="245"/>
    </location>
</feature>
<feature type="turn" evidence="7">
    <location>
        <begin position="248"/>
        <end position="250"/>
    </location>
</feature>
<feature type="strand" evidence="7">
    <location>
        <begin position="254"/>
        <end position="256"/>
    </location>
</feature>
<feature type="helix" evidence="7">
    <location>
        <begin position="264"/>
        <end position="275"/>
    </location>
</feature>
<feature type="strand" evidence="7">
    <location>
        <begin position="280"/>
        <end position="286"/>
    </location>
</feature>
<feature type="helix" evidence="7">
    <location>
        <begin position="290"/>
        <end position="292"/>
    </location>
</feature>
<feature type="helix" evidence="7">
    <location>
        <begin position="297"/>
        <end position="315"/>
    </location>
</feature>
<sequence length="319" mass="35064">MDKYPFLREAGSSFKDRDVTKMSDLIATWDGQDIKGPALIGVPLSKSSISHSGASFAPGTIRQALKHSSAYSAELGEHVVSELLYDLGDIDIHVTDIVKSHHHIFQTMHALLSDHPDWVPLILGGDNSISYSTIKAIAQTKGTTAVIQFDAHHDVRNTEDGGPTNGTPFRRLLDEEIIEGQHLIQLGIREFSNSQAYEAYAKKHNVNIHTMDMIREKGLIPTIKEILPVVQDKTDFIFISVDMDVLDQSHAPGCPAIGPGGLYTDELLEAVKYIAQQPNVAGIEIVEVDPTLDFRDMTSRAAAHVLLHALKGMKLSPFK</sequence>
<keyword id="KW-0002">3D-structure</keyword>
<keyword id="KW-0369">Histidine metabolism</keyword>
<keyword id="KW-0378">Hydrolase</keyword>
<keyword id="KW-0464">Manganese</keyword>
<keyword id="KW-0479">Metal-binding</keyword>
<keyword id="KW-1185">Reference proteome</keyword>
<organism>
    <name type="scientific">Bacillus subtilis (strain 168)</name>
    <dbReference type="NCBI Taxonomy" id="224308"/>
    <lineage>
        <taxon>Bacteria</taxon>
        <taxon>Bacillati</taxon>
        <taxon>Bacillota</taxon>
        <taxon>Bacilli</taxon>
        <taxon>Bacillales</taxon>
        <taxon>Bacillaceae</taxon>
        <taxon>Bacillus</taxon>
    </lineage>
</organism>
<dbReference type="EC" id="3.5.3.8" evidence="1 2"/>
<dbReference type="EMBL" id="D31856">
    <property type="protein sequence ID" value="BAA06641.1"/>
    <property type="molecule type" value="Genomic_DNA"/>
</dbReference>
<dbReference type="EMBL" id="AL009126">
    <property type="protein sequence ID" value="CAB15974.1"/>
    <property type="molecule type" value="Genomic_DNA"/>
</dbReference>
<dbReference type="PIR" id="B69643">
    <property type="entry name" value="B69643"/>
</dbReference>
<dbReference type="RefSeq" id="NP_391817.1">
    <property type="nucleotide sequence ID" value="NC_000964.3"/>
</dbReference>
<dbReference type="RefSeq" id="WP_003243908.1">
    <property type="nucleotide sequence ID" value="NZ_OZ025638.1"/>
</dbReference>
<dbReference type="PDB" id="3M1R">
    <property type="method" value="X-ray"/>
    <property type="resolution" value="2.20 A"/>
    <property type="chains" value="A/B/C/D/E/F=1-319"/>
</dbReference>
<dbReference type="PDBsum" id="3M1R"/>
<dbReference type="SMR" id="P42068"/>
<dbReference type="FunCoup" id="P42068">
    <property type="interactions" value="21"/>
</dbReference>
<dbReference type="STRING" id="224308.BSU39380"/>
<dbReference type="PaxDb" id="224308-BSU39380"/>
<dbReference type="DNASU" id="937546"/>
<dbReference type="EnsemblBacteria" id="CAB15974">
    <property type="protein sequence ID" value="CAB15974"/>
    <property type="gene ID" value="BSU_39380"/>
</dbReference>
<dbReference type="GeneID" id="937546"/>
<dbReference type="KEGG" id="bsu:BSU39380"/>
<dbReference type="PATRIC" id="fig|224308.179.peg.4263"/>
<dbReference type="eggNOG" id="COG0010">
    <property type="taxonomic scope" value="Bacteria"/>
</dbReference>
<dbReference type="InParanoid" id="P42068"/>
<dbReference type="OrthoDB" id="9788689at2"/>
<dbReference type="PhylomeDB" id="P42068"/>
<dbReference type="BioCyc" id="BSUB:BSU39380-MONOMER"/>
<dbReference type="BioCyc" id="MetaCyc:MONOMER-11606"/>
<dbReference type="UniPathway" id="UPA00379">
    <property type="reaction ID" value="UER00552"/>
</dbReference>
<dbReference type="EvolutionaryTrace" id="P42068"/>
<dbReference type="Proteomes" id="UP000001570">
    <property type="component" value="Chromosome"/>
</dbReference>
<dbReference type="GO" id="GO:0008783">
    <property type="term" value="F:agmatinase activity"/>
    <property type="evidence" value="ECO:0000318"/>
    <property type="project" value="GO_Central"/>
</dbReference>
<dbReference type="GO" id="GO:0050415">
    <property type="term" value="F:formimidoylglutamase activity"/>
    <property type="evidence" value="ECO:0007669"/>
    <property type="project" value="UniProtKB-UniRule"/>
</dbReference>
<dbReference type="GO" id="GO:0030145">
    <property type="term" value="F:manganese ion binding"/>
    <property type="evidence" value="ECO:0007669"/>
    <property type="project" value="UniProtKB-UniRule"/>
</dbReference>
<dbReference type="GO" id="GO:0019556">
    <property type="term" value="P:L-histidine catabolic process to glutamate and formamide"/>
    <property type="evidence" value="ECO:0007669"/>
    <property type="project" value="UniProtKB-UniPathway"/>
</dbReference>
<dbReference type="GO" id="GO:0019557">
    <property type="term" value="P:L-histidine catabolic process to glutamate and formate"/>
    <property type="evidence" value="ECO:0007669"/>
    <property type="project" value="UniProtKB-UniPathway"/>
</dbReference>
<dbReference type="GO" id="GO:0033389">
    <property type="term" value="P:putrescine biosynthetic process from arginine, via agmatine"/>
    <property type="evidence" value="ECO:0000318"/>
    <property type="project" value="GO_Central"/>
</dbReference>
<dbReference type="CDD" id="cd09990">
    <property type="entry name" value="Agmatinase-like"/>
    <property type="match status" value="1"/>
</dbReference>
<dbReference type="Gene3D" id="3.40.800.10">
    <property type="entry name" value="Ureohydrolase domain"/>
    <property type="match status" value="1"/>
</dbReference>
<dbReference type="HAMAP" id="MF_00737">
    <property type="entry name" value="Formimidoylglutam"/>
    <property type="match status" value="1"/>
</dbReference>
<dbReference type="InterPro" id="IPR005923">
    <property type="entry name" value="HutG"/>
</dbReference>
<dbReference type="InterPro" id="IPR006035">
    <property type="entry name" value="Ureohydrolase"/>
</dbReference>
<dbReference type="InterPro" id="IPR023696">
    <property type="entry name" value="Ureohydrolase_dom_sf"/>
</dbReference>
<dbReference type="InterPro" id="IPR020855">
    <property type="entry name" value="Ureohydrolase_Mn_BS"/>
</dbReference>
<dbReference type="NCBIfam" id="TIGR01227">
    <property type="entry name" value="hutG"/>
    <property type="match status" value="1"/>
</dbReference>
<dbReference type="PANTHER" id="PTHR11358">
    <property type="entry name" value="ARGINASE/AGMATINASE"/>
    <property type="match status" value="1"/>
</dbReference>
<dbReference type="PANTHER" id="PTHR11358:SF35">
    <property type="entry name" value="FORMIMIDOYLGLUTAMASE"/>
    <property type="match status" value="1"/>
</dbReference>
<dbReference type="Pfam" id="PF00491">
    <property type="entry name" value="Arginase"/>
    <property type="match status" value="1"/>
</dbReference>
<dbReference type="PIRSF" id="PIRSF036979">
    <property type="entry name" value="Arginase"/>
    <property type="match status" value="1"/>
</dbReference>
<dbReference type="PRINTS" id="PR00116">
    <property type="entry name" value="ARGINASE"/>
</dbReference>
<dbReference type="SUPFAM" id="SSF52768">
    <property type="entry name" value="Arginase/deacetylase"/>
    <property type="match status" value="1"/>
</dbReference>
<dbReference type="PROSITE" id="PS01053">
    <property type="entry name" value="ARGINASE_1"/>
    <property type="match status" value="1"/>
</dbReference>
<dbReference type="PROSITE" id="PS51409">
    <property type="entry name" value="ARGINASE_2"/>
    <property type="match status" value="1"/>
</dbReference>
<protein>
    <recommendedName>
        <fullName evidence="1">Formimidoylglutamase</fullName>
        <ecNumber evidence="1 2">3.5.3.8</ecNumber>
    </recommendedName>
    <alternativeName>
        <fullName evidence="1">Formiminoglutamase</fullName>
    </alternativeName>
    <alternativeName>
        <fullName evidence="1 3">Formiminoglutamate hydrolase</fullName>
    </alternativeName>
    <alternativeName>
        <fullName evidence="3">N-formimino-L-glutamate formiminohydrolase</fullName>
    </alternativeName>
</protein>
<gene>
    <name evidence="1" type="primary">hutG</name>
    <name type="ordered locus">BSU39380</name>
    <name type="ORF">EE57C</name>
</gene>
<reference key="1">
    <citation type="journal article" date="1995" name="Microbiology">
        <title>Cloning and sequencing of a 29 kb region of the Bacillus subtilis genome containing the hut and wapA loci.</title>
        <authorList>
            <person name="Yoshida K."/>
            <person name="Sano H."/>
            <person name="Seki S."/>
            <person name="Oda M."/>
            <person name="Fujimura M."/>
            <person name="Fujita Y."/>
        </authorList>
    </citation>
    <scope>NUCLEOTIDE SEQUENCE [GENOMIC DNA]</scope>
    <source>
        <strain>168 / BGSC1A1</strain>
    </source>
</reference>
<reference key="2">
    <citation type="journal article" date="1997" name="Nature">
        <title>The complete genome sequence of the Gram-positive bacterium Bacillus subtilis.</title>
        <authorList>
            <person name="Kunst F."/>
            <person name="Ogasawara N."/>
            <person name="Moszer I."/>
            <person name="Albertini A.M."/>
            <person name="Alloni G."/>
            <person name="Azevedo V."/>
            <person name="Bertero M.G."/>
            <person name="Bessieres P."/>
            <person name="Bolotin A."/>
            <person name="Borchert S."/>
            <person name="Borriss R."/>
            <person name="Boursier L."/>
            <person name="Brans A."/>
            <person name="Braun M."/>
            <person name="Brignell S.C."/>
            <person name="Bron S."/>
            <person name="Brouillet S."/>
            <person name="Bruschi C.V."/>
            <person name="Caldwell B."/>
            <person name="Capuano V."/>
            <person name="Carter N.M."/>
            <person name="Choi S.-K."/>
            <person name="Codani J.-J."/>
            <person name="Connerton I.F."/>
            <person name="Cummings N.J."/>
            <person name="Daniel R.A."/>
            <person name="Denizot F."/>
            <person name="Devine K.M."/>
            <person name="Duesterhoeft A."/>
            <person name="Ehrlich S.D."/>
            <person name="Emmerson P.T."/>
            <person name="Entian K.-D."/>
            <person name="Errington J."/>
            <person name="Fabret C."/>
            <person name="Ferrari E."/>
            <person name="Foulger D."/>
            <person name="Fritz C."/>
            <person name="Fujita M."/>
            <person name="Fujita Y."/>
            <person name="Fuma S."/>
            <person name="Galizzi A."/>
            <person name="Galleron N."/>
            <person name="Ghim S.-Y."/>
            <person name="Glaser P."/>
            <person name="Goffeau A."/>
            <person name="Golightly E.J."/>
            <person name="Grandi G."/>
            <person name="Guiseppi G."/>
            <person name="Guy B.J."/>
            <person name="Haga K."/>
            <person name="Haiech J."/>
            <person name="Harwood C.R."/>
            <person name="Henaut A."/>
            <person name="Hilbert H."/>
            <person name="Holsappel S."/>
            <person name="Hosono S."/>
            <person name="Hullo M.-F."/>
            <person name="Itaya M."/>
            <person name="Jones L.-M."/>
            <person name="Joris B."/>
            <person name="Karamata D."/>
            <person name="Kasahara Y."/>
            <person name="Klaerr-Blanchard M."/>
            <person name="Klein C."/>
            <person name="Kobayashi Y."/>
            <person name="Koetter P."/>
            <person name="Koningstein G."/>
            <person name="Krogh S."/>
            <person name="Kumano M."/>
            <person name="Kurita K."/>
            <person name="Lapidus A."/>
            <person name="Lardinois S."/>
            <person name="Lauber J."/>
            <person name="Lazarevic V."/>
            <person name="Lee S.-M."/>
            <person name="Levine A."/>
            <person name="Liu H."/>
            <person name="Masuda S."/>
            <person name="Mauel C."/>
            <person name="Medigue C."/>
            <person name="Medina N."/>
            <person name="Mellado R.P."/>
            <person name="Mizuno M."/>
            <person name="Moestl D."/>
            <person name="Nakai S."/>
            <person name="Noback M."/>
            <person name="Noone D."/>
            <person name="O'Reilly M."/>
            <person name="Ogawa K."/>
            <person name="Ogiwara A."/>
            <person name="Oudega B."/>
            <person name="Park S.-H."/>
            <person name="Parro V."/>
            <person name="Pohl T.M."/>
            <person name="Portetelle D."/>
            <person name="Porwollik S."/>
            <person name="Prescott A.M."/>
            <person name="Presecan E."/>
            <person name="Pujic P."/>
            <person name="Purnelle B."/>
            <person name="Rapoport G."/>
            <person name="Rey M."/>
            <person name="Reynolds S."/>
            <person name="Rieger M."/>
            <person name="Rivolta C."/>
            <person name="Rocha E."/>
            <person name="Roche B."/>
            <person name="Rose M."/>
            <person name="Sadaie Y."/>
            <person name="Sato T."/>
            <person name="Scanlan E."/>
            <person name="Schleich S."/>
            <person name="Schroeter R."/>
            <person name="Scoffone F."/>
            <person name="Sekiguchi J."/>
            <person name="Sekowska A."/>
            <person name="Seror S.J."/>
            <person name="Serror P."/>
            <person name="Shin B.-S."/>
            <person name="Soldo B."/>
            <person name="Sorokin A."/>
            <person name="Tacconi E."/>
            <person name="Takagi T."/>
            <person name="Takahashi H."/>
            <person name="Takemaru K."/>
            <person name="Takeuchi M."/>
            <person name="Tamakoshi A."/>
            <person name="Tanaka T."/>
            <person name="Terpstra P."/>
            <person name="Tognoni A."/>
            <person name="Tosato V."/>
            <person name="Uchiyama S."/>
            <person name="Vandenbol M."/>
            <person name="Vannier F."/>
            <person name="Vassarotti A."/>
            <person name="Viari A."/>
            <person name="Wambutt R."/>
            <person name="Wedler E."/>
            <person name="Wedler H."/>
            <person name="Weitzenegger T."/>
            <person name="Winters P."/>
            <person name="Wipat A."/>
            <person name="Yamamoto H."/>
            <person name="Yamane K."/>
            <person name="Yasumoto K."/>
            <person name="Yata K."/>
            <person name="Yoshida K."/>
            <person name="Yoshikawa H.-F."/>
            <person name="Zumstein E."/>
            <person name="Yoshikawa H."/>
            <person name="Danchin A."/>
        </authorList>
    </citation>
    <scope>NUCLEOTIDE SEQUENCE [LARGE SCALE GENOMIC DNA]</scope>
    <source>
        <strain>168</strain>
    </source>
</reference>
<reference key="3">
    <citation type="journal article" date="1970" name="J. Biol. Chem.">
        <title>Urocanase and N-formimino-L-glutamate formiminohydrolase of Bacillus subtilis, two enzymes of the histidine degradation pathway.</title>
        <authorList>
            <person name="Kaminskas E."/>
            <person name="Kimhi Y."/>
            <person name="Magasanik B."/>
        </authorList>
    </citation>
    <scope>FUNCTION</scope>
    <scope>CATALYTIC ACTIVITY</scope>
    <scope>COFACTOR</scope>
    <scope>BIOPHYSICOCHEMICAL PROPERTIES</scope>
    <scope>PATHWAY</scope>
</reference>
<reference evidence="6" key="4">
    <citation type="submission" date="2010-03" db="PDB data bank">
        <title>The crystal structure of formimidoylglutamase from Bacillus subtilis subsp. subtilis str. 168.</title>
        <authorList>
            <person name="Tan K."/>
            <person name="Bigelow L."/>
            <person name="Buck K."/>
            <person name="Joachimiak A."/>
        </authorList>
    </citation>
    <scope>X-RAY CRYSTALLOGRAPHY (2.20 ANGSTROMS) IN COMPLEX WITH CALCIUM</scope>
</reference>
<comment type="function">
    <text evidence="1 2">Catalyzes the conversion of N-formimidoyl-L-glutamate to L-glutamate and formamide.</text>
</comment>
<comment type="catalytic activity">
    <reaction evidence="1 2">
        <text>N-formimidoyl-L-glutamate + H2O = formamide + L-glutamate</text>
        <dbReference type="Rhea" id="RHEA:22492"/>
        <dbReference type="ChEBI" id="CHEBI:15377"/>
        <dbReference type="ChEBI" id="CHEBI:16397"/>
        <dbReference type="ChEBI" id="CHEBI:29985"/>
        <dbReference type="ChEBI" id="CHEBI:58928"/>
        <dbReference type="EC" id="3.5.3.8"/>
    </reaction>
</comment>
<comment type="cofactor">
    <cofactor evidence="1 2">
        <name>Mn(2+)</name>
        <dbReference type="ChEBI" id="CHEBI:29035"/>
    </cofactor>
    <text evidence="2">Binds 2 manganese ions per subunit. Can also use other divalent cation, with lower efficiency (PubMed:4990470).</text>
</comment>
<comment type="biophysicochemical properties">
    <kinetics>
        <Vmax evidence="2">4.4 mmol/min/mg enzyme (at pH 8.7)</Vmax>
        <Vmax evidence="2">0.46 mmol/min/mg enzyme (at pH 7.4)</Vmax>
    </kinetics>
    <phDependence>
        <text evidence="2">Optimum pH is 8.7.</text>
    </phDependence>
</comment>
<comment type="pathway">
    <text evidence="1 2">Amino-acid degradation; L-histidine degradation into L-glutamate; L-glutamate from N-formimidoyl-L-glutamate (hydrolase route): step 1/1.</text>
</comment>
<comment type="similarity">
    <text evidence="1 4">Belongs to the arginase family.</text>
</comment>
<name>HUTG_BACSU</name>
<evidence type="ECO:0000255" key="1">
    <source>
        <dbReference type="HAMAP-Rule" id="MF_00737"/>
    </source>
</evidence>
<evidence type="ECO:0000269" key="2">
    <source>
    </source>
</evidence>
<evidence type="ECO:0000303" key="3">
    <source>
    </source>
</evidence>
<evidence type="ECO:0000305" key="4"/>
<evidence type="ECO:0000305" key="5">
    <source ref="4"/>
</evidence>
<evidence type="ECO:0007744" key="6">
    <source>
        <dbReference type="PDB" id="3M1R"/>
    </source>
</evidence>
<evidence type="ECO:0007829" key="7">
    <source>
        <dbReference type="PDB" id="3M1R"/>
    </source>
</evidence>
<proteinExistence type="evidence at protein level"/>
<accession>P42068</accession>